<keyword id="KW-0027">Amidation</keyword>
<keyword id="KW-0903">Direct protein sequencing</keyword>
<keyword id="KW-0527">Neuropeptide</keyword>
<keyword id="KW-0964">Secreted</keyword>
<feature type="peptide" id="PRO_0000044793" description="Melanostatin">
    <location>
        <begin position="1"/>
        <end position="36"/>
    </location>
</feature>
<feature type="modified residue" description="Tyrosine amide" evidence="1">
    <location>
        <position position="36"/>
    </location>
</feature>
<reference key="1">
    <citation type="journal article" date="1992" name="Regul. Pept.">
        <title>The primary structure and tissue distribution of an amphibian neuropeptide Y.</title>
        <authorList>
            <person name="McKay D.M."/>
            <person name="Shaw C."/>
            <person name="Halton D.W."/>
            <person name="Thim L."/>
            <person name="Buchanan K.D."/>
        </authorList>
    </citation>
    <scope>PROTEIN SEQUENCE</scope>
    <scope>AMIDATION AT TYR-36</scope>
    <source>
        <tissue>Brain</tissue>
    </source>
</reference>
<evidence type="ECO:0000269" key="1">
    <source>
    </source>
</evidence>
<evidence type="ECO:0000305" key="2"/>
<proteinExistence type="evidence at protein level"/>
<accession>P69102</accession>
<accession>P29949</accession>
<comment type="function">
    <text>NPY is implicated in the control of feeding and in secretion of gonadotrophin-release hormone. NPY may play a physiological role in the regulation of pituitary melanotrophs.</text>
</comment>
<comment type="subcellular location">
    <subcellularLocation>
        <location>Secreted</location>
    </subcellularLocation>
</comment>
<comment type="similarity">
    <text evidence="2">Belongs to the NPY family.</text>
</comment>
<sequence length="36" mass="4245">YPSKPDNPGEDAPAEDMAKYYSALRHYINLITRQRY</sequence>
<protein>
    <recommendedName>
        <fullName>Melanostatin</fullName>
    </recommendedName>
    <alternativeName>
        <fullName>Melanotropin release-inhibiting factor</fullName>
    </alternativeName>
    <alternativeName>
        <fullName>Neuropeptide Y</fullName>
        <shortName>NPY</shortName>
    </alternativeName>
</protein>
<organism>
    <name type="scientific">Rana temporaria</name>
    <name type="common">European common frog</name>
    <dbReference type="NCBI Taxonomy" id="8407"/>
    <lineage>
        <taxon>Eukaryota</taxon>
        <taxon>Metazoa</taxon>
        <taxon>Chordata</taxon>
        <taxon>Craniata</taxon>
        <taxon>Vertebrata</taxon>
        <taxon>Euteleostomi</taxon>
        <taxon>Amphibia</taxon>
        <taxon>Batrachia</taxon>
        <taxon>Anura</taxon>
        <taxon>Neobatrachia</taxon>
        <taxon>Ranoidea</taxon>
        <taxon>Ranidae</taxon>
        <taxon>Rana</taxon>
        <taxon>Rana</taxon>
    </lineage>
</organism>
<name>NPY_RANTE</name>
<dbReference type="PIR" id="A48540">
    <property type="entry name" value="A48540"/>
</dbReference>
<dbReference type="SMR" id="P69102"/>
<dbReference type="GO" id="GO:0005615">
    <property type="term" value="C:extracellular space"/>
    <property type="evidence" value="ECO:0007669"/>
    <property type="project" value="TreeGrafter"/>
</dbReference>
<dbReference type="GO" id="GO:0005184">
    <property type="term" value="F:neuropeptide hormone activity"/>
    <property type="evidence" value="ECO:0007669"/>
    <property type="project" value="TreeGrafter"/>
</dbReference>
<dbReference type="GO" id="GO:0031841">
    <property type="term" value="F:neuropeptide Y receptor binding"/>
    <property type="evidence" value="ECO:0007669"/>
    <property type="project" value="TreeGrafter"/>
</dbReference>
<dbReference type="GO" id="GO:0007631">
    <property type="term" value="P:feeding behavior"/>
    <property type="evidence" value="ECO:0007669"/>
    <property type="project" value="TreeGrafter"/>
</dbReference>
<dbReference type="GO" id="GO:0007218">
    <property type="term" value="P:neuropeptide signaling pathway"/>
    <property type="evidence" value="ECO:0007669"/>
    <property type="project" value="UniProtKB-KW"/>
</dbReference>
<dbReference type="CDD" id="cd00126">
    <property type="entry name" value="PAH"/>
    <property type="match status" value="1"/>
</dbReference>
<dbReference type="Gene3D" id="6.10.250.900">
    <property type="match status" value="1"/>
</dbReference>
<dbReference type="InterPro" id="IPR001955">
    <property type="entry name" value="Pancreatic_hormone-like"/>
</dbReference>
<dbReference type="InterPro" id="IPR020392">
    <property type="entry name" value="Pancreatic_hormone-like_CS"/>
</dbReference>
<dbReference type="PANTHER" id="PTHR10533">
    <property type="entry name" value="NEUROPEPTIDE Y/PANCREATIC HORMONE/PEPTIDE YY"/>
    <property type="match status" value="1"/>
</dbReference>
<dbReference type="PANTHER" id="PTHR10533:SF5">
    <property type="entry name" value="PRO-NEUROPEPTIDE Y"/>
    <property type="match status" value="1"/>
</dbReference>
<dbReference type="Pfam" id="PF00159">
    <property type="entry name" value="Hormone_3"/>
    <property type="match status" value="1"/>
</dbReference>
<dbReference type="PRINTS" id="PR00278">
    <property type="entry name" value="PANCHORMONE"/>
</dbReference>
<dbReference type="SMART" id="SM00309">
    <property type="entry name" value="PAH"/>
    <property type="match status" value="1"/>
</dbReference>
<dbReference type="PROSITE" id="PS00265">
    <property type="entry name" value="PANCREATIC_HORMONE_1"/>
    <property type="match status" value="1"/>
</dbReference>
<dbReference type="PROSITE" id="PS50276">
    <property type="entry name" value="PANCREATIC_HORMONE_2"/>
    <property type="match status" value="1"/>
</dbReference>